<gene>
    <name evidence="12" type="primary">Apobec1</name>
</gene>
<proteinExistence type="evidence at protein level"/>
<organism>
    <name type="scientific">Rattus norvegicus</name>
    <name type="common">Rat</name>
    <dbReference type="NCBI Taxonomy" id="10116"/>
    <lineage>
        <taxon>Eukaryota</taxon>
        <taxon>Metazoa</taxon>
        <taxon>Chordata</taxon>
        <taxon>Craniata</taxon>
        <taxon>Vertebrata</taxon>
        <taxon>Euteleostomi</taxon>
        <taxon>Mammalia</taxon>
        <taxon>Eutheria</taxon>
        <taxon>Euarchontoglires</taxon>
        <taxon>Glires</taxon>
        <taxon>Rodentia</taxon>
        <taxon>Myomorpha</taxon>
        <taxon>Muroidea</taxon>
        <taxon>Muridae</taxon>
        <taxon>Murinae</taxon>
        <taxon>Rattus</taxon>
    </lineage>
</organism>
<evidence type="ECO:0000250" key="1">
    <source>
        <dbReference type="UniProtKB" id="P41238"/>
    </source>
</evidence>
<evidence type="ECO:0000250" key="2">
    <source>
        <dbReference type="UniProtKB" id="P51908"/>
    </source>
</evidence>
<evidence type="ECO:0000250" key="3">
    <source>
        <dbReference type="UniProtKB" id="Q9Y235"/>
    </source>
</evidence>
<evidence type="ECO:0000255" key="4">
    <source>
        <dbReference type="PROSITE-ProRule" id="PRU01083"/>
    </source>
</evidence>
<evidence type="ECO:0000269" key="5">
    <source>
    </source>
</evidence>
<evidence type="ECO:0000269" key="6">
    <source>
    </source>
</evidence>
<evidence type="ECO:0000269" key="7">
    <source>
    </source>
</evidence>
<evidence type="ECO:0000303" key="8">
    <source>
    </source>
</evidence>
<evidence type="ECO:0000303" key="9">
    <source>
    </source>
</evidence>
<evidence type="ECO:0000305" key="10"/>
<evidence type="ECO:0000305" key="11">
    <source>
    </source>
</evidence>
<evidence type="ECO:0000312" key="12">
    <source>
        <dbReference type="RGD" id="2133"/>
    </source>
</evidence>
<name>ABEC1_RAT</name>
<reference key="1">
    <citation type="journal article" date="1993" name="Science">
        <title>Molecular cloning of an apolipoprotein B messenger RNA editing protein.</title>
        <authorList>
            <person name="Teng B."/>
            <person name="Burant C.F."/>
            <person name="Davidson N.O."/>
        </authorList>
    </citation>
    <scope>NUCLEOTIDE SEQUENCE [MRNA]</scope>
    <scope>FUNCTION</scope>
    <scope>CATALYTIC ACTIVITY</scope>
    <source>
        <strain>Sprague-Dawley</strain>
        <tissue>Small intestine</tissue>
    </source>
</reference>
<reference key="2">
    <citation type="journal article" date="2004" name="Genome Res.">
        <title>The status, quality, and expansion of the NIH full-length cDNA project: the Mammalian Gene Collection (MGC).</title>
        <authorList>
            <consortium name="The MGC Project Team"/>
        </authorList>
    </citation>
    <scope>NUCLEOTIDE SEQUENCE [LARGE SCALE MRNA]</scope>
    <source>
        <tissue>Ovary</tissue>
    </source>
</reference>
<reference key="3">
    <citation type="journal article" date="2000" name="Mol. Cell. Biol.">
        <title>Molecular cloning of APOBEC-1 complementation factor, a novel RNA-binding protein involved in the editing of apolipoprotein B mRNA.</title>
        <authorList>
            <person name="Mehta A."/>
            <person name="Kinter M.T."/>
            <person name="Sherman N.E."/>
            <person name="Driscoll D.M."/>
        </authorList>
    </citation>
    <scope>INTERACTION WITH A1CF</scope>
</reference>
<reference key="4">
    <citation type="journal article" date="2001" name="J. Biol. Chem.">
        <title>Identification of GRY-RBP as an apolipoprotein B RNA-binding protein that interacts with both apobec-1 and apobec-1 complementation factor to modulate C to U editing.</title>
        <authorList>
            <person name="Blanc V."/>
            <person name="Navaratnam N."/>
            <person name="Henderson J.O."/>
            <person name="Anant S."/>
            <person name="Kennedy S."/>
            <person name="Jarmuz A."/>
            <person name="Scott J."/>
            <person name="Davidson N.O."/>
        </authorList>
    </citation>
    <scope>INTERACTION WITH SYNCRIP</scope>
</reference>
<comment type="function">
    <text evidence="1 2 7">Cytidine deaminase catalyzing the cytidine to uridine postranscriptional editing of a variety of mRNAs. Form complexes with cofactors that confer differential editing activity and selectivity. Responsible for the postranscriptional editing of a CAA codon for Gln to a UAA codon for stop in the apolipoprotein B mRNA (PubMed:8511591). Also involved in CGA (Arg) to UGA (Stop) editing in the NF1 mRNA (By similarity). May also play a role in the epigenetic regulation of gene expression by participating in DNA demethylation (By similarity).</text>
</comment>
<comment type="catalytic activity">
    <reaction evidence="1">
        <text>a cytidine in mRNA + H2O + H(+) = a uridine in mRNA + NH4(+)</text>
        <dbReference type="Rhea" id="RHEA:74355"/>
        <dbReference type="Rhea" id="RHEA-COMP:14658"/>
        <dbReference type="Rhea" id="RHEA-COMP:15145"/>
        <dbReference type="ChEBI" id="CHEBI:15377"/>
        <dbReference type="ChEBI" id="CHEBI:15378"/>
        <dbReference type="ChEBI" id="CHEBI:28938"/>
        <dbReference type="ChEBI" id="CHEBI:65315"/>
        <dbReference type="ChEBI" id="CHEBI:82748"/>
    </reaction>
    <physiologicalReaction direction="left-to-right" evidence="1">
        <dbReference type="Rhea" id="RHEA:74356"/>
    </physiologicalReaction>
</comment>
<comment type="catalytic activity">
    <reaction evidence="7">
        <text>cytidine(6666) in apoB mRNA + H2O + H(+) = uridine(6666) in apoB mRNA + NH4(+)</text>
        <dbReference type="Rhea" id="RHEA:21772"/>
        <dbReference type="Rhea" id="RHEA-COMP:13888"/>
        <dbReference type="Rhea" id="RHEA-COMP:13889"/>
        <dbReference type="ChEBI" id="CHEBI:15377"/>
        <dbReference type="ChEBI" id="CHEBI:15378"/>
        <dbReference type="ChEBI" id="CHEBI:28938"/>
        <dbReference type="ChEBI" id="CHEBI:65315"/>
        <dbReference type="ChEBI" id="CHEBI:82748"/>
        <dbReference type="EC" id="3.5.4.36"/>
    </reaction>
    <physiologicalReaction direction="left-to-right" evidence="7">
        <dbReference type="Rhea" id="RHEA:21773"/>
    </physiologicalReaction>
</comment>
<comment type="cofactor">
    <cofactor evidence="3">
        <name>Zn(2+)</name>
        <dbReference type="ChEBI" id="CHEBI:29105"/>
    </cofactor>
    <text evidence="3">Binds 1 Zn(2+) ion per subunit.</text>
</comment>
<comment type="subunit">
    <text evidence="1 5 6">Homodimer (By similarity). Interacts with A1CF; form an mRNA editing complex (PubMed:10669759). Interacts with RBM47; form an mRNA editing complex (By similarity). Found in a complex with CELF2/CUGBP2 and A1CF (By similarity). Interacts with HNRPAB (By similarity). Interacts with SYNCRIP (PubMed:11134005).</text>
</comment>
<comment type="subcellular location">
    <subcellularLocation>
        <location evidence="1">Cytoplasm</location>
    </subcellularLocation>
    <subcellularLocation>
        <location evidence="1">Nucleus</location>
    </subcellularLocation>
</comment>
<comment type="tissue specificity">
    <text>Expressed in the liver as well as small intestine.</text>
</comment>
<comment type="similarity">
    <text evidence="10">Belongs to the cytidine and deoxycytidylate deaminase family.</text>
</comment>
<dbReference type="EC" id="3.5.4.-" evidence="7"/>
<dbReference type="EC" id="3.5.4.36" evidence="7"/>
<dbReference type="EMBL" id="L07114">
    <property type="protein sequence ID" value="AAA17394.1"/>
    <property type="molecule type" value="mRNA"/>
</dbReference>
<dbReference type="EMBL" id="BC085335">
    <property type="protein sequence ID" value="AAH85335.1"/>
    <property type="molecule type" value="mRNA"/>
</dbReference>
<dbReference type="PIR" id="I59577">
    <property type="entry name" value="I59577"/>
</dbReference>
<dbReference type="RefSeq" id="NP_037039.1">
    <property type="nucleotide sequence ID" value="NM_012907.2"/>
</dbReference>
<dbReference type="RefSeq" id="XP_006237352.1">
    <property type="nucleotide sequence ID" value="XM_006237290.4"/>
</dbReference>
<dbReference type="RefSeq" id="XP_006237353.1">
    <property type="nucleotide sequence ID" value="XM_006237291.2"/>
</dbReference>
<dbReference type="RefSeq" id="XP_006237354.1">
    <property type="nucleotide sequence ID" value="XM_006237292.2"/>
</dbReference>
<dbReference type="RefSeq" id="XP_006237355.1">
    <property type="nucleotide sequence ID" value="XM_006237293.4"/>
</dbReference>
<dbReference type="RefSeq" id="XP_017447973.1">
    <property type="nucleotide sequence ID" value="XM_017592484.3"/>
</dbReference>
<dbReference type="RefSeq" id="XP_038963041.1">
    <property type="nucleotide sequence ID" value="XM_039107113.2"/>
</dbReference>
<dbReference type="SMR" id="P38483"/>
<dbReference type="CORUM" id="P38483"/>
<dbReference type="FunCoup" id="P38483">
    <property type="interactions" value="19"/>
</dbReference>
<dbReference type="STRING" id="10116.ENSRNOP00000020735"/>
<dbReference type="PhosphoSitePlus" id="P38483"/>
<dbReference type="PaxDb" id="10116-ENSRNOP00000020735"/>
<dbReference type="GeneID" id="25383"/>
<dbReference type="KEGG" id="rno:25383"/>
<dbReference type="UCSC" id="RGD:2133">
    <property type="organism name" value="rat"/>
</dbReference>
<dbReference type="AGR" id="RGD:2133"/>
<dbReference type="CTD" id="339"/>
<dbReference type="RGD" id="2133">
    <property type="gene designation" value="Apobec1"/>
</dbReference>
<dbReference type="VEuPathDB" id="HostDB:ENSRNOG00000015411"/>
<dbReference type="eggNOG" id="ENOG502SNW2">
    <property type="taxonomic scope" value="Eukaryota"/>
</dbReference>
<dbReference type="HOGENOM" id="CLU_080056_3_0_1"/>
<dbReference type="InParanoid" id="P38483"/>
<dbReference type="OrthoDB" id="5956704at2759"/>
<dbReference type="PhylomeDB" id="P38483"/>
<dbReference type="TreeFam" id="TF331356"/>
<dbReference type="BRENDA" id="3.5.4.36">
    <property type="organism ID" value="5301"/>
</dbReference>
<dbReference type="Reactome" id="R-RNO-72200">
    <property type="pathway name" value="mRNA Editing: C to U Conversion"/>
</dbReference>
<dbReference type="Reactome" id="R-RNO-75094">
    <property type="pathway name" value="Formation of the Editosome"/>
</dbReference>
<dbReference type="PRO" id="PR:P38483"/>
<dbReference type="Proteomes" id="UP000002494">
    <property type="component" value="Chromosome 4"/>
</dbReference>
<dbReference type="Bgee" id="ENSRNOG00000015411">
    <property type="expression patterns" value="Expressed in duodenum and 17 other cell types or tissues"/>
</dbReference>
<dbReference type="GO" id="GO:0030895">
    <property type="term" value="C:apolipoprotein B mRNA editing enzyme complex"/>
    <property type="evidence" value="ECO:0000266"/>
    <property type="project" value="RGD"/>
</dbReference>
<dbReference type="GO" id="GO:0005737">
    <property type="term" value="C:cytoplasm"/>
    <property type="evidence" value="ECO:0000250"/>
    <property type="project" value="UniProtKB"/>
</dbReference>
<dbReference type="GO" id="GO:0005634">
    <property type="term" value="C:nucleus"/>
    <property type="evidence" value="ECO:0000266"/>
    <property type="project" value="RGD"/>
</dbReference>
<dbReference type="GO" id="GO:0004126">
    <property type="term" value="F:cytidine deaminase activity"/>
    <property type="evidence" value="ECO:0000314"/>
    <property type="project" value="MGI"/>
</dbReference>
<dbReference type="GO" id="GO:0008047">
    <property type="term" value="F:enzyme activator activity"/>
    <property type="evidence" value="ECO:0000314"/>
    <property type="project" value="RGD"/>
</dbReference>
<dbReference type="GO" id="GO:0035925">
    <property type="term" value="F:mRNA 3'-UTR AU-rich region binding"/>
    <property type="evidence" value="ECO:0000266"/>
    <property type="project" value="RGD"/>
</dbReference>
<dbReference type="GO" id="GO:0003729">
    <property type="term" value="F:mRNA binding"/>
    <property type="evidence" value="ECO:0000314"/>
    <property type="project" value="RGD"/>
</dbReference>
<dbReference type="GO" id="GO:0019904">
    <property type="term" value="F:protein domain specific binding"/>
    <property type="evidence" value="ECO:0000353"/>
    <property type="project" value="RGD"/>
</dbReference>
<dbReference type="GO" id="GO:0043021">
    <property type="term" value="F:ribonucleoprotein complex binding"/>
    <property type="evidence" value="ECO:0000353"/>
    <property type="project" value="RGD"/>
</dbReference>
<dbReference type="GO" id="GO:0003723">
    <property type="term" value="F:RNA binding"/>
    <property type="evidence" value="ECO:0000318"/>
    <property type="project" value="GO_Central"/>
</dbReference>
<dbReference type="GO" id="GO:0008270">
    <property type="term" value="F:zinc ion binding"/>
    <property type="evidence" value="ECO:0007669"/>
    <property type="project" value="InterPro"/>
</dbReference>
<dbReference type="GO" id="GO:0032869">
    <property type="term" value="P:cellular response to insulin stimulus"/>
    <property type="evidence" value="ECO:0000270"/>
    <property type="project" value="RGD"/>
</dbReference>
<dbReference type="GO" id="GO:0046087">
    <property type="term" value="P:cytidine metabolic process"/>
    <property type="evidence" value="ECO:0000305"/>
    <property type="project" value="UniProtKB"/>
</dbReference>
<dbReference type="GO" id="GO:0016554">
    <property type="term" value="P:cytidine to uridine editing"/>
    <property type="evidence" value="ECO:0000314"/>
    <property type="project" value="RGD"/>
</dbReference>
<dbReference type="GO" id="GO:0051607">
    <property type="term" value="P:defense response to virus"/>
    <property type="evidence" value="ECO:0000314"/>
    <property type="project" value="RGD"/>
</dbReference>
<dbReference type="GO" id="GO:0070383">
    <property type="term" value="P:DNA cytosine deamination"/>
    <property type="evidence" value="ECO:0000314"/>
    <property type="project" value="RGD"/>
</dbReference>
<dbReference type="GO" id="GO:0051649">
    <property type="term" value="P:establishment of localization in cell"/>
    <property type="evidence" value="ECO:0000266"/>
    <property type="project" value="RGD"/>
</dbReference>
<dbReference type="GO" id="GO:0042158">
    <property type="term" value="P:lipoprotein biosynthetic process"/>
    <property type="evidence" value="ECO:0000266"/>
    <property type="project" value="RGD"/>
</dbReference>
<dbReference type="GO" id="GO:0042157">
    <property type="term" value="P:lipoprotein metabolic process"/>
    <property type="evidence" value="ECO:0000266"/>
    <property type="project" value="RGD"/>
</dbReference>
<dbReference type="GO" id="GO:0042953">
    <property type="term" value="P:lipoprotein transport"/>
    <property type="evidence" value="ECO:0000266"/>
    <property type="project" value="RGD"/>
</dbReference>
<dbReference type="GO" id="GO:0016556">
    <property type="term" value="P:mRNA modification"/>
    <property type="evidence" value="ECO:0000314"/>
    <property type="project" value="RGD"/>
</dbReference>
<dbReference type="GO" id="GO:0006397">
    <property type="term" value="P:mRNA processing"/>
    <property type="evidence" value="ECO:0007669"/>
    <property type="project" value="UniProtKB-KW"/>
</dbReference>
<dbReference type="GO" id="GO:0048255">
    <property type="term" value="P:mRNA stabilization"/>
    <property type="evidence" value="ECO:0000266"/>
    <property type="project" value="RGD"/>
</dbReference>
<dbReference type="GO" id="GO:2000623">
    <property type="term" value="P:negative regulation of nuclear-transcribed mRNA catabolic process, nonsense-mediated decay"/>
    <property type="evidence" value="ECO:0000266"/>
    <property type="project" value="RGD"/>
</dbReference>
<dbReference type="GO" id="GO:0090209">
    <property type="term" value="P:negative regulation of triglyceride metabolic process"/>
    <property type="evidence" value="ECO:0000266"/>
    <property type="project" value="RGD"/>
</dbReference>
<dbReference type="GO" id="GO:0044029">
    <property type="term" value="P:positive regulation of gene expression via chromosomal CpG island demethylation"/>
    <property type="evidence" value="ECO:0000250"/>
    <property type="project" value="UniProtKB"/>
</dbReference>
<dbReference type="GO" id="GO:0090366">
    <property type="term" value="P:positive regulation of mRNA modification"/>
    <property type="evidence" value="ECO:0000314"/>
    <property type="project" value="RGD"/>
</dbReference>
<dbReference type="GO" id="GO:0042127">
    <property type="term" value="P:regulation of cell population proliferation"/>
    <property type="evidence" value="ECO:0000266"/>
    <property type="project" value="RGD"/>
</dbReference>
<dbReference type="GO" id="GO:0051592">
    <property type="term" value="P:response to calcium ion"/>
    <property type="evidence" value="ECO:0000314"/>
    <property type="project" value="RGD"/>
</dbReference>
<dbReference type="GO" id="GO:0045471">
    <property type="term" value="P:response to ethanol"/>
    <property type="evidence" value="ECO:0000314"/>
    <property type="project" value="RGD"/>
</dbReference>
<dbReference type="GO" id="GO:0010332">
    <property type="term" value="P:response to gamma radiation"/>
    <property type="evidence" value="ECO:0000266"/>
    <property type="project" value="RGD"/>
</dbReference>
<dbReference type="GO" id="GO:0009410">
    <property type="term" value="P:response to xenobiotic stimulus"/>
    <property type="evidence" value="ECO:0000314"/>
    <property type="project" value="RGD"/>
</dbReference>
<dbReference type="GO" id="GO:0010043">
    <property type="term" value="P:response to zinc ion"/>
    <property type="evidence" value="ECO:0000270"/>
    <property type="project" value="RGD"/>
</dbReference>
<dbReference type="GO" id="GO:0006641">
    <property type="term" value="P:triglyceride metabolic process"/>
    <property type="evidence" value="ECO:0000266"/>
    <property type="project" value="RGD"/>
</dbReference>
<dbReference type="CDD" id="cd01283">
    <property type="entry name" value="cytidine_deaminase"/>
    <property type="match status" value="1"/>
</dbReference>
<dbReference type="FunFam" id="3.40.140.10:FF:000049">
    <property type="entry name" value="C-&gt;U-editing enzyme APOBEC-1 isoform X2"/>
    <property type="match status" value="1"/>
</dbReference>
<dbReference type="Gene3D" id="3.40.140.10">
    <property type="entry name" value="Cytidine Deaminase, domain 2"/>
    <property type="match status" value="1"/>
</dbReference>
<dbReference type="InterPro" id="IPR016192">
    <property type="entry name" value="APOBEC/CMP_deaminase_Zn-bd"/>
</dbReference>
<dbReference type="InterPro" id="IPR041547">
    <property type="entry name" value="APOBEC1"/>
</dbReference>
<dbReference type="InterPro" id="IPR050610">
    <property type="entry name" value="APOBEC_Cyt_Deaminase"/>
</dbReference>
<dbReference type="InterPro" id="IPR002125">
    <property type="entry name" value="CMP_dCMP_dom"/>
</dbReference>
<dbReference type="InterPro" id="IPR016193">
    <property type="entry name" value="Cytidine_deaminase-like"/>
</dbReference>
<dbReference type="PANTHER" id="PTHR13857:SF26">
    <property type="entry name" value="C-U-EDITING ENZYME APOBEC-1"/>
    <property type="match status" value="1"/>
</dbReference>
<dbReference type="PANTHER" id="PTHR13857">
    <property type="entry name" value="MRNA EDITING ENZYME"/>
    <property type="match status" value="1"/>
</dbReference>
<dbReference type="Pfam" id="PF18774">
    <property type="entry name" value="APOBEC4_like"/>
    <property type="match status" value="1"/>
</dbReference>
<dbReference type="SUPFAM" id="SSF53927">
    <property type="entry name" value="Cytidine deaminase-like"/>
    <property type="match status" value="1"/>
</dbReference>
<dbReference type="PROSITE" id="PS00903">
    <property type="entry name" value="CYT_DCMP_DEAMINASES_1"/>
    <property type="match status" value="1"/>
</dbReference>
<dbReference type="PROSITE" id="PS51747">
    <property type="entry name" value="CYT_DCMP_DEAMINASES_2"/>
    <property type="match status" value="1"/>
</dbReference>
<feature type="chain" id="PRO_0000171748" description="C-&gt;U-editing enzyme APOBEC-1">
    <location>
        <begin position="1"/>
        <end position="229"/>
    </location>
</feature>
<feature type="domain" description="CMP/dCMP-type deaminase" evidence="4">
    <location>
        <begin position="10"/>
        <end position="134"/>
    </location>
</feature>
<feature type="active site" description="Proton donor" evidence="3">
    <location>
        <position position="63"/>
    </location>
</feature>
<feature type="binding site" evidence="3">
    <location>
        <position position="61"/>
    </location>
    <ligand>
        <name>Zn(2+)</name>
        <dbReference type="ChEBI" id="CHEBI:29105"/>
        <note>catalytic</note>
    </ligand>
</feature>
<feature type="binding site" evidence="3">
    <location>
        <position position="93"/>
    </location>
    <ligand>
        <name>Zn(2+)</name>
        <dbReference type="ChEBI" id="CHEBI:29105"/>
        <note>catalytic</note>
    </ligand>
</feature>
<feature type="binding site" evidence="3">
    <location>
        <position position="96"/>
    </location>
    <ligand>
        <name>Zn(2+)</name>
        <dbReference type="ChEBI" id="CHEBI:29105"/>
        <note>catalytic</note>
    </ligand>
</feature>
<keyword id="KW-0963">Cytoplasm</keyword>
<keyword id="KW-0378">Hydrolase</keyword>
<keyword id="KW-0479">Metal-binding</keyword>
<keyword id="KW-0507">mRNA processing</keyword>
<keyword id="KW-0539">Nucleus</keyword>
<keyword id="KW-1185">Reference proteome</keyword>
<keyword id="KW-0862">Zinc</keyword>
<protein>
    <recommendedName>
        <fullName evidence="11">C-&gt;U-editing enzyme APOBEC-1</fullName>
        <ecNumber evidence="7">3.5.4.-</ecNumber>
    </recommendedName>
    <alternativeName>
        <fullName evidence="9">Apo B messenger RNA-editing protein</fullName>
        <shortName evidence="9">REPR</shortName>
    </alternativeName>
    <alternativeName>
        <fullName evidence="12">Apolipoprotein B mRNA-editing enzyme catalytic subunit 1</fullName>
        <shortName evidence="8">APOBEC-1</shortName>
        <shortName>Apolipoprotein B mRNA-editing enzyme 1</shortName>
        <ecNumber evidence="7">3.5.4.36</ecNumber>
    </alternativeName>
    <alternativeName>
        <fullName evidence="11">mRNA(cytosine(6666)) deaminase 1</fullName>
    </alternativeName>
</protein>
<accession>P38483</accession>
<sequence>MSSETGPVAVDPTLRRRIEPHEFEVFFDPRELRKETCLLYEINWGGRHSIWRHTSQNTNKHVEVNFIEKFTTERYFCPNTRCSITWFLSWSPCGECSRAITEFLSRYPHVTLFIYIARLYHHADPRNRQGLRDLISSGVTIQIMTEQESGYCWRNFVNYSPSNEAHWPRYPHLWVRLYVLELYCIILGLPPCLNILRRKQPQLTFFTIALQSCHYQRLPPHILWATGLK</sequence>